<sequence>METPSQRRATRSGAQASSTPLSPTRITRLQEKEDLQELNDRLAVYIDRVRSLETENAGLRLRITESEEVVSREVSGIKSAYEAELGDARKTLDSVAKERARLQLELSKVREEFKELKARNTKKEGDLMAAQARLKDLEALLNSKEAALSTALSEKRTLEGELHDLRGQVAKLEAALGEAKKQLQDEMLRRVDAENRLQTLKEELDFQKNIYSEELRETKRRHETRLVEIDNGKQREFESRLADALQDLRAQHEDQVEQYKKELEKTYSAKLDNARQSAERNSNLVGAAHEELQQSRIRIDSLSAQLSQLQKQLAAKEAKLRDLEDSLARERDTSRRLLADKEREMAEMRARMQQQLDEYQELLDIKLALDMEIHAYRKLLEGEEERLRLSPSPTSQRSRGRASSHSSQTQSGGSVTKKRKLESSESRSSFSQHARTSGRVAVEEVDEEGKFVRLRNKSNEDQSMGNWQIKRQNGDDPLLTYRFPPKFTLKAGQVVTIWAAGAGATHSPPADLVWKSQNTWGCGNSLRTALINSTGEEVAMRKLVRSVTMIEDDEDEDGDDLLHHHHGSHGSSSGDPAEYNLRSRTVLCGTCGQPADKASASSSGAQVGGSISSGSSASSVTVTRSYRSVGGSGGGSFGDNLVTRSYLLGNSRPRTQSPQNCSIM</sequence>
<comment type="function">
    <molecule>Lamin-A/C</molecule>
    <text evidence="1">Lamins are intermediate filament proteins that assemble into a filamentous meshwork, and which constitute the major components of the nuclear lamina, a fibrous layer on the nucleoplasmic side of the inner nuclear membrane. Lamins provide a framework for the nuclear envelope, bridging the nuclear envelope and chromatin, thereby playing an important role in nuclear assembly, chromatin organization, nuclear membrane and telomere dynamics. Lamin A and C also regulate matrix stiffness by conferring nuclear mechanical properties. The structural integrity of the lamina is strictly controlled by the cell cycle, as seen by the disintegration and formation of the nuclear envelope in prophase and telophase, respectively. Lamin A and C are present in equal amounts in the lamina of mammals. Also invoved in DNA repair: recruited by DNA repair proteins XRCC4 and IFFO1 to the DNA double-strand breaks (DSBs) to prevent chromosome translocation by immobilizing broken DNA ends. Required for normal development of peripheral nervous system and skeletal muscle and for muscle satellite cell proliferation. Required for osteoblastogenesis and bone formation. Also prevents fat infiltration of muscle and bone marrow, helping to maintain the volume and strength of skeletal muscle and bone. Required for cardiac homeostasis.</text>
</comment>
<comment type="function">
    <molecule>Prelamin-A/C</molecule>
    <text evidence="1">Prelamin-A/C can accelerate smooth muscle cell senescence. It acts to disrupt mitosis and induce DNA damage in vascular smooth muscle cells (VSMCs), leading to mitotic failure, genomic instability, and premature senescence.</text>
</comment>
<comment type="subunit">
    <text evidence="1 2">Homodimer of lamin A and lamin C. Lamin dimers then assemble into dimeric head-to-tail polymers. Ultimately, two head-to-tail polymers assemble laterally into a protofilament with a uniformly shaped rod of 3.5 nm in diameter. Interacts with lamin-associated polypeptides IA, IB and TMPO-alpha, RB1 and with emerin (By similarity). Interacts with SREBF1, SREBF2, SUN2 and TMEM43 (By similarity). Interacts with TMEM201 (By similarity). Proteolytically processed isoform A interacts with NARF. Interacts with SUN1. Interacts with MLIP. Interacts with DMPK; may regulate nuclear envelope stability. Interacts with SUV39H1; the interaction increases stability of SUV39H1. Interacts with SYNE2. Interacts with ITSN1 isoform 2. Interacts with IFFO1; enables the formation of an interior nucleoskeleton that is recruited to DNA double-strand breaks (By similarity).</text>
</comment>
<comment type="subunit">
    <molecule>Prelamin-A/C</molecule>
    <text evidence="1">Interacts with EMD.</text>
</comment>
<comment type="subunit">
    <molecule>Isoform C</molecule>
    <text evidence="1">Interacts (via C-terminus) with LEMD2 (via N-terminus) (in vitro).</text>
</comment>
<comment type="subcellular location">
    <subcellularLocation>
        <location evidence="1">Nucleus lamina</location>
    </subcellularLocation>
    <subcellularLocation>
        <location evidence="1">Nucleus envelope</location>
    </subcellularLocation>
    <subcellularLocation>
        <location evidence="1">Nucleus</location>
        <location evidence="1">Nucleoplasm</location>
    </subcellularLocation>
    <subcellularLocation>
        <location evidence="1">Nucleus matrix</location>
    </subcellularLocation>
    <text evidence="1">Farnesylation of prelamin-A/C facilitates nuclear envelope targeting and subsequent cleavage by ZMPSTE24/FACE1 to remove the farnesyl group produces mature lamin-A/C, which can then be inserted into the nuclear lamina. EMD is required for proper localization of non-farnesylated prelamin-A/C. Also localizes to the micronuclear envelope in response to response to genome instability.</text>
</comment>
<comment type="alternative products">
    <event type="alternative splicing"/>
    <isoform>
        <id>Q3ZD69-1</id>
        <name>A</name>
        <sequence type="displayed"/>
    </isoform>
    <isoform>
        <id>Q3ZD69-2</id>
        <name>C</name>
        <sequence type="described" ref="VSP_017068 VSP_017069"/>
    </isoform>
    <text>Isoform A and isoform C are present in equal amounts in the lamina of mammals.</text>
</comment>
<comment type="PTM">
    <text evidence="1">Proteolytic cleavage of the C-terminal of 18 residues of prelamin-A/C results in the production of lamin-A/C. The prelamin-A/C maturation pathway includes farnesylation of CAAX motif by protein farnesyltransferase (FNTA and FNTB), removal of the last three amino acids (-AAX) by RCE1/FACE2 and/or ZMPSTE24, methylation of the C-terminal cysteine by ICMT and endoproteolytic removal of the last 15 C-terminal amino acids by ZMPSTE24. Proteolytic cleavage requires prior farnesylation and methylation, and absence of these blocks cleavage.</text>
</comment>
<comment type="PTM">
    <text evidence="1">Farnesylation of prelamin-A/C facilitates nuclear envelope targeting.</text>
</comment>
<comment type="PTM">
    <text evidence="1">Phosphorylation plays a key role in lamin organization, subcellular localization and nuclear envelope disintegration. Phosphorylation by CDK1 at Ser-22 and Ser-392 at the onset of mitosis drives lamin disassembly and nuclear envelope breakdown. Phosphorylation at Ser-22 and Ser-392 during interphase promotes localization to the nucleoplasm and regulates lamina assembly. Phosphorylation at Ser-22, Ser-392 and Ser-628 during interphase causes redistribution between the nucleus and the cytoplasm. Phosphorylation at Ser-22 by CDK1 regulates matrix stiffness. Phosphorylation status of Ser-22 determines its localization between double-strand break (DSB) sites and the nuclear matrix. Phosphorylated by ATR at Ser-282 in response to DNA damage, leading to lamin disassembly and nuclear envelope rupture. Phosphorylation also regulates stability in micronuclei arising from genome instability: phosphorylation at Ser-395 by ATR in response to genome instability and double-stranded DNA breaks primes LMNA for subsequent phosphorylation at Ser-392 by CDK1 and micronuclei envelope rupture. The rupture of micronuclear envelope triggers the cGAS-STING pathway thereby activating the type I interferon response and innate immunity.</text>
</comment>
<comment type="PTM">
    <text evidence="2">Acetylation by KAT8 is required for nuclear architecture.</text>
</comment>
<comment type="PTM">
    <text evidence="1">Sumoylation is necessary for the localization to the nuclear envelope.</text>
</comment>
<comment type="similarity">
    <text evidence="6">Belongs to the intermediate filament family.</text>
</comment>
<accession>Q3ZD69</accession>
<accession>Q3ZD68</accession>
<name>LMNA_PIG</name>
<evidence type="ECO:0000250" key="1">
    <source>
        <dbReference type="UniProtKB" id="P02545"/>
    </source>
</evidence>
<evidence type="ECO:0000250" key="2">
    <source>
        <dbReference type="UniProtKB" id="P48678"/>
    </source>
</evidence>
<evidence type="ECO:0000250" key="3">
    <source>
        <dbReference type="UniProtKB" id="P48679"/>
    </source>
</evidence>
<evidence type="ECO:0000255" key="4"/>
<evidence type="ECO:0000255" key="5">
    <source>
        <dbReference type="PROSITE-ProRule" id="PRU01187"/>
    </source>
</evidence>
<evidence type="ECO:0000255" key="6">
    <source>
        <dbReference type="PROSITE-ProRule" id="PRU01188"/>
    </source>
</evidence>
<evidence type="ECO:0000256" key="7">
    <source>
        <dbReference type="SAM" id="MobiDB-lite"/>
    </source>
</evidence>
<evidence type="ECO:0000305" key="8"/>
<protein>
    <recommendedName>
        <fullName>Prelamin-A/C</fullName>
    </recommendedName>
    <component>
        <recommendedName>
            <fullName>Lamin-A/C</fullName>
        </recommendedName>
    </component>
</protein>
<reference key="1">
    <citation type="submission" date="2005-03" db="EMBL/GenBank/DDBJ databases">
        <title>Characterization of the porcine LMNA gene exhibiting developmentally regulated expression.</title>
        <authorList>
            <person name="Jacobsen M."/>
            <person name="Horn P."/>
            <person name="Bendixen C."/>
        </authorList>
    </citation>
    <scope>NUCLEOTIDE SEQUENCE [GENOMIC DNA]</scope>
</reference>
<feature type="chain" id="PRO_0000398839" description="Prelamin-A/C">
    <location>
        <begin position="1"/>
        <end position="661"/>
    </location>
</feature>
<feature type="chain" id="PRO_0000063812" description="Lamin-A/C">
    <location>
        <begin position="1"/>
        <end position="646"/>
    </location>
</feature>
<feature type="propeptide" id="PRO_0000398840" description="Removed in Lamin-A/C form" evidence="1">
    <location>
        <begin position="647"/>
        <end position="661"/>
    </location>
</feature>
<feature type="propeptide" id="PRO_0000403444" description="Removed in Prelamin-A/C form and in Lamin-A/C form" evidence="1">
    <location>
        <begin position="662"/>
        <end position="664"/>
    </location>
</feature>
<feature type="domain" description="IF rod" evidence="6">
    <location>
        <begin position="31"/>
        <end position="387"/>
    </location>
</feature>
<feature type="domain" description="LTD" evidence="5">
    <location>
        <begin position="428"/>
        <end position="545"/>
    </location>
</feature>
<feature type="region of interest" description="Interaction with MLIP" evidence="1">
    <location>
        <begin position="1"/>
        <end position="130"/>
    </location>
</feature>
<feature type="region of interest" description="Head">
    <location>
        <begin position="1"/>
        <end position="33"/>
    </location>
</feature>
<feature type="region of interest" description="Disordered" evidence="7">
    <location>
        <begin position="1"/>
        <end position="24"/>
    </location>
</feature>
<feature type="region of interest" description="Coil 1A">
    <location>
        <begin position="34"/>
        <end position="70"/>
    </location>
</feature>
<feature type="region of interest" description="Linker 1">
    <location>
        <begin position="71"/>
        <end position="80"/>
    </location>
</feature>
<feature type="region of interest" description="Coil 1B">
    <location>
        <begin position="81"/>
        <end position="218"/>
    </location>
</feature>
<feature type="region of interest" description="Linker 2">
    <location>
        <begin position="219"/>
        <end position="242"/>
    </location>
</feature>
<feature type="region of interest" description="Coil 2">
    <location>
        <begin position="243"/>
        <end position="383"/>
    </location>
</feature>
<feature type="region of interest" description="Tail">
    <location>
        <begin position="384"/>
        <end position="664"/>
    </location>
</feature>
<feature type="region of interest" description="Disordered" evidence="7">
    <location>
        <begin position="384"/>
        <end position="442"/>
    </location>
</feature>
<feature type="region of interest" description="Disordered" evidence="7">
    <location>
        <begin position="555"/>
        <end position="577"/>
    </location>
</feature>
<feature type="region of interest" description="Disordered" evidence="7">
    <location>
        <begin position="598"/>
        <end position="620"/>
    </location>
</feature>
<feature type="short sequence motif" description="Nuclear localization signal" evidence="4">
    <location>
        <begin position="417"/>
        <end position="422"/>
    </location>
</feature>
<feature type="compositionally biased region" description="Low complexity" evidence="7">
    <location>
        <begin position="403"/>
        <end position="414"/>
    </location>
</feature>
<feature type="site" description="Heptad change of phase">
    <location>
        <position position="266"/>
    </location>
</feature>
<feature type="site" description="Stutter" evidence="8">
    <location>
        <position position="325"/>
    </location>
</feature>
<feature type="site" description="Heptad change of phase">
    <location>
        <position position="330"/>
    </location>
</feature>
<feature type="site" description="Cleavage; by endoprotease" evidence="1">
    <location>
        <begin position="646"/>
        <end position="647"/>
    </location>
</feature>
<feature type="modified residue" description="N-acetylmethionine" evidence="1">
    <location>
        <position position="1"/>
    </location>
</feature>
<feature type="modified residue" description="Phosphothreonine" evidence="1">
    <location>
        <position position="3"/>
    </location>
</feature>
<feature type="modified residue" description="Phosphoserine" evidence="1">
    <location>
        <position position="5"/>
    </location>
</feature>
<feature type="modified residue" description="Phosphothreonine" evidence="1">
    <location>
        <position position="10"/>
    </location>
</feature>
<feature type="modified residue" description="Phosphoserine" evidence="1">
    <location>
        <position position="12"/>
    </location>
</feature>
<feature type="modified residue" description="Phosphoserine" evidence="1">
    <location>
        <position position="18"/>
    </location>
</feature>
<feature type="modified residue" description="Phosphothreonine" evidence="1">
    <location>
        <position position="19"/>
    </location>
</feature>
<feature type="modified residue" description="Phosphoserine" evidence="1">
    <location>
        <position position="22"/>
    </location>
</feature>
<feature type="modified residue" description="N6-acetyllysine; alternate" evidence="2">
    <location>
        <position position="32"/>
    </location>
</feature>
<feature type="modified residue" description="N6-succinyllysine; alternate" evidence="2">
    <location>
        <position position="32"/>
    </location>
</feature>
<feature type="modified residue" description="Phosphoserine" evidence="1">
    <location>
        <position position="51"/>
    </location>
</feature>
<feature type="modified residue" description="Phosphoserine" evidence="1">
    <location>
        <position position="66"/>
    </location>
</feature>
<feature type="modified residue" description="Phosphoserine" evidence="1">
    <location>
        <position position="71"/>
    </location>
</feature>
<feature type="modified residue" description="N6-acetyllysine" evidence="2">
    <location>
        <position position="78"/>
    </location>
</feature>
<feature type="modified residue" description="N6-acetyllysine" evidence="2">
    <location>
        <position position="97"/>
    </location>
</feature>
<feature type="modified residue" description="Phosphoserine" evidence="1">
    <location>
        <position position="107"/>
    </location>
</feature>
<feature type="modified residue" description="N6-acetyllysine" evidence="1">
    <location>
        <position position="108"/>
    </location>
</feature>
<feature type="modified residue" description="N6-acetyllysine" evidence="2">
    <location>
        <position position="114"/>
    </location>
</feature>
<feature type="modified residue" description="N6-acetyllysine" evidence="2">
    <location>
        <position position="123"/>
    </location>
</feature>
<feature type="modified residue" description="N6-acetyllysine" evidence="2">
    <location>
        <position position="135"/>
    </location>
</feature>
<feature type="modified residue" description="N6-acetyllysine" evidence="2">
    <location>
        <position position="144"/>
    </location>
</feature>
<feature type="modified residue" description="N6-acetyllysine" evidence="2">
    <location>
        <position position="155"/>
    </location>
</feature>
<feature type="modified residue" description="N6-acetyllysine; alternate" evidence="2">
    <location>
        <position position="171"/>
    </location>
</feature>
<feature type="modified residue" description="N6-succinyllysine; alternate" evidence="2">
    <location>
        <position position="171"/>
    </location>
</feature>
<feature type="modified residue" description="N6-acetyllysine" evidence="2">
    <location>
        <position position="180"/>
    </location>
</feature>
<feature type="modified residue" description="N6-acetyllysine" evidence="2">
    <location>
        <position position="201"/>
    </location>
</feature>
<feature type="modified residue" description="N6-acetyllysine" evidence="2">
    <location>
        <position position="208"/>
    </location>
</feature>
<feature type="modified residue" description="Phosphoserine" evidence="1">
    <location>
        <position position="212"/>
    </location>
</feature>
<feature type="modified residue" description="N6-acetyllysine" evidence="2">
    <location>
        <position position="233"/>
    </location>
</feature>
<feature type="modified residue" description="N6-acetyllysine" evidence="2">
    <location>
        <position position="260"/>
    </location>
</feature>
<feature type="modified residue" description="N6-acetyllysine" evidence="2">
    <location>
        <position position="265"/>
    </location>
</feature>
<feature type="modified residue" description="N6-acetyllysine" evidence="1">
    <location>
        <position position="270"/>
    </location>
</feature>
<feature type="modified residue" description="Phosphoserine" evidence="1">
    <location>
        <position position="277"/>
    </location>
</feature>
<feature type="modified residue" description="Phosphoserine" evidence="1">
    <location>
        <position position="282"/>
    </location>
</feature>
<feature type="modified residue" description="Phosphoserine" evidence="1">
    <location>
        <position position="301"/>
    </location>
</feature>
<feature type="modified residue" description="Phosphoserine" evidence="1">
    <location>
        <position position="307"/>
    </location>
</feature>
<feature type="modified residue" description="N6-acetyllysine" evidence="1">
    <location>
        <position position="311"/>
    </location>
</feature>
<feature type="modified residue" description="N6-acetyllysine" evidence="2">
    <location>
        <position position="316"/>
    </location>
</feature>
<feature type="modified residue" description="N6-acetyllysine" evidence="2">
    <location>
        <position position="341"/>
    </location>
</feature>
<feature type="modified residue" description="Phosphoserine" evidence="1">
    <location>
        <position position="390"/>
    </location>
</feature>
<feature type="modified residue" description="Phosphoserine" evidence="2">
    <location>
        <position position="392"/>
    </location>
</feature>
<feature type="modified residue" description="Phosphoserine" evidence="1">
    <location>
        <position position="395"/>
    </location>
</feature>
<feature type="modified residue" description="Phosphoserine" evidence="1">
    <location>
        <position position="398"/>
    </location>
</feature>
<feature type="modified residue" description="Phosphoserine" evidence="1">
    <location>
        <position position="403"/>
    </location>
</feature>
<feature type="modified residue" description="Phosphoserine" evidence="1">
    <location>
        <position position="404"/>
    </location>
</feature>
<feature type="modified residue" description="Phosphoserine" evidence="1">
    <location>
        <position position="406"/>
    </location>
</feature>
<feature type="modified residue" description="Phosphoserine" evidence="2">
    <location>
        <position position="407"/>
    </location>
</feature>
<feature type="modified residue" description="Phosphoserine" evidence="1">
    <location>
        <position position="414"/>
    </location>
</feature>
<feature type="modified residue" description="Phosphothreonine" evidence="1">
    <location>
        <position position="416"/>
    </location>
</feature>
<feature type="modified residue" description="N6-acetyllysine" evidence="2">
    <location>
        <position position="417"/>
    </location>
</feature>
<feature type="modified residue" description="Phosphoserine" evidence="1">
    <location>
        <position position="423"/>
    </location>
</feature>
<feature type="modified residue" description="Phosphoserine" evidence="1">
    <location>
        <position position="426"/>
    </location>
</feature>
<feature type="modified residue" description="Phosphoserine" evidence="1">
    <location>
        <position position="429"/>
    </location>
</feature>
<feature type="modified residue" description="Phosphoserine" evidence="1">
    <location>
        <position position="431"/>
    </location>
</feature>
<feature type="modified residue" description="N6-acetyllysine" evidence="1">
    <location>
        <position position="450"/>
    </location>
</feature>
<feature type="modified residue" description="N6-acetyllysine" evidence="2">
    <location>
        <position position="457"/>
    </location>
</feature>
<feature type="modified residue" description="Phosphoserine" evidence="1">
    <location>
        <position position="458"/>
    </location>
</feature>
<feature type="modified residue" description="Phosphoserine" evidence="1">
    <location>
        <position position="463"/>
    </location>
</feature>
<feature type="modified residue" description="N6-acetyllysine" evidence="2">
    <location>
        <position position="486"/>
    </location>
</feature>
<feature type="modified residue" description="Phosphothreonine" evidence="3">
    <location>
        <position position="496"/>
    </location>
</feature>
<feature type="modified residue" description="Phosphothreonine" evidence="1">
    <location>
        <position position="505"/>
    </location>
</feature>
<feature type="modified residue" description="Phosphoserine" evidence="1">
    <location>
        <position position="533"/>
    </location>
</feature>
<feature type="modified residue" description="Phosphoserine" evidence="2">
    <location>
        <position position="546"/>
    </location>
</feature>
<feature type="modified residue" description="Phosphothreonine" evidence="2">
    <location>
        <position position="548"/>
    </location>
</feature>
<feature type="modified residue" description="Phosphoserine" evidence="2">
    <location>
        <position position="568"/>
    </location>
</feature>
<feature type="modified residue" description="Phosphoserine" evidence="2">
    <location>
        <position position="571"/>
    </location>
</feature>
<feature type="modified residue" description="Phosphoserine" evidence="1">
    <location>
        <position position="612"/>
    </location>
</feature>
<feature type="modified residue" description="Phosphoserine" evidence="1">
    <location>
        <position position="613"/>
    </location>
</feature>
<feature type="modified residue" description="Phosphoserine" evidence="2">
    <location>
        <position position="616"/>
    </location>
</feature>
<feature type="modified residue" description="Phosphoserine" evidence="1">
    <location>
        <position position="619"/>
    </location>
</feature>
<feature type="modified residue" description="Phosphoserine" evidence="1">
    <location>
        <position position="628"/>
    </location>
</feature>
<feature type="modified residue" description="Phosphoserine" evidence="1">
    <location>
        <position position="632"/>
    </location>
</feature>
<feature type="modified residue" description="Phosphoserine" evidence="1">
    <location>
        <position position="636"/>
    </location>
</feature>
<feature type="modified residue" description="Cysteine methyl ester" evidence="1">
    <location>
        <position position="661"/>
    </location>
</feature>
<feature type="lipid moiety-binding region" description="S-farnesyl cysteine" evidence="1">
    <location>
        <position position="661"/>
    </location>
</feature>
<feature type="glycosylation site" description="O-linked (GlcNAc) serine" evidence="1">
    <location>
        <position position="625"/>
    </location>
</feature>
<feature type="glycosylation site" description="O-linked (GlcNAc) serine" evidence="1">
    <location>
        <position position="628"/>
    </location>
</feature>
<feature type="cross-link" description="Glycyl lysine isopeptide (Lys-Gly) (interchain with G-Cter in SUMO2); alternate" evidence="1">
    <location>
        <position position="32"/>
    </location>
</feature>
<feature type="cross-link" description="Glycyl lysine isopeptide (Lys-Gly) (interchain with G-Cter in SUMO2)" evidence="1">
    <location>
        <position position="97"/>
    </location>
</feature>
<feature type="cross-link" description="Glycyl lysine isopeptide (Lys-Gly) (interchain with G-Cter in SUMO2); alternate" evidence="1">
    <location>
        <position position="171"/>
    </location>
</feature>
<feature type="cross-link" description="Glycyl lysine isopeptide (Lys-Gly) (interchain with G-Cter in SUMO); alternate" evidence="1">
    <location>
        <position position="201"/>
    </location>
</feature>
<feature type="cross-link" description="Glycyl lysine isopeptide (Lys-Gly) (interchain with G-Cter in SUMO2); alternate" evidence="1">
    <location>
        <position position="201"/>
    </location>
</feature>
<feature type="cross-link" description="Glycyl lysine isopeptide (Lys-Gly) (interchain with G-Cter in SUMO2)" evidence="1">
    <location>
        <position position="208"/>
    </location>
</feature>
<feature type="cross-link" description="Glycyl lysine isopeptide (Lys-Gly) (interchain with G-Cter in SUMO2)" evidence="1">
    <location>
        <position position="219"/>
    </location>
</feature>
<feature type="cross-link" description="Glycyl lysine isopeptide (Lys-Gly) (interchain with G-Cter in SUMO2)" evidence="1">
    <location>
        <position position="233"/>
    </location>
</feature>
<feature type="cross-link" description="Glycyl lysine isopeptide (Lys-Gly) (interchain with G-Cter in SUMO2); alternate" evidence="1">
    <location>
        <position position="260"/>
    </location>
</feature>
<feature type="cross-link" description="Glycyl lysine isopeptide (Lys-Gly) (interchain with G-Cter in SUMO2); alternate" evidence="1">
    <location>
        <position position="270"/>
    </location>
</feature>
<feature type="cross-link" description="Glycyl lysine isopeptide (Lys-Gly) (interchain with G-Cter in SUMO2); alternate" evidence="1">
    <location>
        <position position="311"/>
    </location>
</feature>
<feature type="cross-link" description="Glycyl lysine isopeptide (Lys-Gly) (interchain with G-Cter in SUMO2)" evidence="1">
    <location>
        <position position="366"/>
    </location>
</feature>
<feature type="cross-link" description="Glycyl lysine isopeptide (Lys-Gly) (interchain with G-Cter in SUMO2)" evidence="1">
    <location>
        <position position="378"/>
    </location>
</feature>
<feature type="cross-link" description="Glycyl lysine isopeptide (Lys-Gly) (interchain with G-Cter in SUMO2)" evidence="1">
    <location>
        <position position="417"/>
    </location>
</feature>
<feature type="cross-link" description="Glycyl lysine isopeptide (Lys-Gly) (interchain with G-Cter in SUMO2)" evidence="1">
    <location>
        <position position="420"/>
    </location>
</feature>
<feature type="cross-link" description="Glycyl lysine isopeptide (Lys-Gly) (interchain with G-Cter in SUMO2); alternate" evidence="1">
    <location>
        <position position="450"/>
    </location>
</feature>
<feature type="cross-link" description="Glycyl lysine isopeptide (Lys-Gly) (interchain with G-Cter in SUMO2)" evidence="1">
    <location>
        <position position="470"/>
    </location>
</feature>
<feature type="cross-link" description="Glycyl lysine isopeptide (Lys-Gly) (interchain with G-Cter in SUMO2)" evidence="1">
    <location>
        <position position="486"/>
    </location>
</feature>
<feature type="cross-link" description="Glycyl lysine isopeptide (Lys-Gly) (interchain with G-Cter in SUMO1); alternate" evidence="1">
    <location>
        <position position="597"/>
    </location>
</feature>
<feature type="cross-link" description="Glycyl lysine isopeptide (Lys-Gly) (interchain with G-Cter in SUMO2); alternate" evidence="1">
    <location>
        <position position="597"/>
    </location>
</feature>
<feature type="splice variant" id="VSP_017068" description="In isoform C." evidence="8">
    <original>GSHGSS</original>
    <variation>VSGSRR</variation>
    <location>
        <begin position="567"/>
        <end position="572"/>
    </location>
</feature>
<feature type="splice variant" id="VSP_017069" description="In isoform C." evidence="8">
    <location>
        <begin position="573"/>
        <end position="664"/>
    </location>
</feature>
<dbReference type="EMBL" id="AY995338">
    <property type="protein sequence ID" value="AAY44741.1"/>
    <property type="molecule type" value="Genomic_DNA"/>
</dbReference>
<dbReference type="EMBL" id="AY995336">
    <property type="protein sequence ID" value="AAY44741.1"/>
    <property type="status" value="JOINED"/>
    <property type="molecule type" value="Genomic_DNA"/>
</dbReference>
<dbReference type="EMBL" id="AY995337">
    <property type="protein sequence ID" value="AAY44741.1"/>
    <property type="status" value="JOINED"/>
    <property type="molecule type" value="Genomic_DNA"/>
</dbReference>
<dbReference type="EMBL" id="AY995338">
    <property type="protein sequence ID" value="AAY44742.1"/>
    <property type="molecule type" value="Genomic_DNA"/>
</dbReference>
<dbReference type="EMBL" id="AY995336">
    <property type="protein sequence ID" value="AAY44742.1"/>
    <property type="status" value="JOINED"/>
    <property type="molecule type" value="Genomic_DNA"/>
</dbReference>
<dbReference type="EMBL" id="AY995337">
    <property type="protein sequence ID" value="AAY44742.1"/>
    <property type="status" value="JOINED"/>
    <property type="molecule type" value="Genomic_DNA"/>
</dbReference>
<dbReference type="BMRB" id="Q3ZD69"/>
<dbReference type="SMR" id="Q3ZD69"/>
<dbReference type="FunCoup" id="Q3ZD69">
    <property type="interactions" value="801"/>
</dbReference>
<dbReference type="STRING" id="9823.ENSSSCP00000047557"/>
<dbReference type="GlyGen" id="Q3ZD69">
    <property type="glycosylation" value="2 sites"/>
</dbReference>
<dbReference type="PaxDb" id="9823-ENSSSCP00000006923"/>
<dbReference type="PeptideAtlas" id="Q3ZD69"/>
<dbReference type="Ensembl" id="ENSSSCT00035048306.1">
    <molecule id="Q3ZD69-1"/>
    <property type="protein sequence ID" value="ENSSSCP00035019320.1"/>
    <property type="gene ID" value="ENSSSCG00035036372.1"/>
</dbReference>
<dbReference type="Ensembl" id="ENSSSCT00040076629.1">
    <molecule id="Q3ZD69-1"/>
    <property type="protein sequence ID" value="ENSSSCP00040032922.1"/>
    <property type="gene ID" value="ENSSSCG00040056293.1"/>
</dbReference>
<dbReference type="Ensembl" id="ENSSSCT00045047898.1">
    <molecule id="Q3ZD69-1"/>
    <property type="protein sequence ID" value="ENSSSCP00045033277.1"/>
    <property type="gene ID" value="ENSSSCG00045027944.1"/>
</dbReference>
<dbReference type="Ensembl" id="ENSSSCT00045048160.1">
    <molecule id="Q3ZD69-2"/>
    <property type="protein sequence ID" value="ENSSSCP00045033481.1"/>
    <property type="gene ID" value="ENSSSCG00045027944.1"/>
</dbReference>
<dbReference type="Ensembl" id="ENSSSCT00065034722.1">
    <molecule id="Q3ZD69-1"/>
    <property type="protein sequence ID" value="ENSSSCP00065014434.1"/>
    <property type="gene ID" value="ENSSSCG00065025889.1"/>
</dbReference>
<dbReference type="Ensembl" id="ENSSSCT00065034736.1">
    <molecule id="Q3ZD69-2"/>
    <property type="protein sequence ID" value="ENSSSCP00065014440.1"/>
    <property type="gene ID" value="ENSSSCG00065025889.1"/>
</dbReference>
<dbReference type="Ensembl" id="ENSSSCT00070055498.1">
    <molecule id="Q3ZD69-1"/>
    <property type="protein sequence ID" value="ENSSSCP00070047121.1"/>
    <property type="gene ID" value="ENSSSCG00070027651.1"/>
</dbReference>
<dbReference type="Ensembl" id="ENSSSCT00070055500.1">
    <molecule id="Q3ZD69-1"/>
    <property type="protein sequence ID" value="ENSSSCP00070047123.1"/>
    <property type="gene ID" value="ENSSSCG00070027651.1"/>
</dbReference>
<dbReference type="Ensembl" id="ENSSSCT00085050550">
    <molecule id="Q3ZD69-1"/>
    <property type="protein sequence ID" value="ENSSSCP00085035312"/>
    <property type="gene ID" value="ENSSSCG00085026319"/>
</dbReference>
<dbReference type="Ensembl" id="ENSSSCT00110073074">
    <molecule id="Q3ZD69-1"/>
    <property type="protein sequence ID" value="ENSSSCP00110051719"/>
    <property type="gene ID" value="ENSSSCG00110038234"/>
</dbReference>
<dbReference type="Ensembl" id="ENSSSCT00115032524">
    <molecule id="Q3ZD69-1"/>
    <property type="protein sequence ID" value="ENSSSCP00115030908"/>
    <property type="gene ID" value="ENSSSCG00115018256"/>
</dbReference>
<dbReference type="Ensembl" id="ENSSSCT00130075113">
    <molecule id="Q3ZD69-1"/>
    <property type="protein sequence ID" value="ENSSSCP00130054077"/>
    <property type="gene ID" value="ENSSSCG00130038491"/>
</dbReference>
<dbReference type="eggNOG" id="KOG0977">
    <property type="taxonomic scope" value="Eukaryota"/>
</dbReference>
<dbReference type="InParanoid" id="Q3ZD69"/>
<dbReference type="Proteomes" id="UP000008227">
    <property type="component" value="Unplaced"/>
</dbReference>
<dbReference type="Proteomes" id="UP000314985">
    <property type="component" value="Chromosome 4"/>
</dbReference>
<dbReference type="Proteomes" id="UP000694570">
    <property type="component" value="Unplaced"/>
</dbReference>
<dbReference type="Proteomes" id="UP000694571">
    <property type="component" value="Unplaced"/>
</dbReference>
<dbReference type="Proteomes" id="UP000694720">
    <property type="component" value="Unplaced"/>
</dbReference>
<dbReference type="Proteomes" id="UP000694722">
    <property type="component" value="Unplaced"/>
</dbReference>
<dbReference type="Proteomes" id="UP000694723">
    <property type="component" value="Unplaced"/>
</dbReference>
<dbReference type="Proteomes" id="UP000694724">
    <property type="component" value="Unplaced"/>
</dbReference>
<dbReference type="Proteomes" id="UP000694725">
    <property type="component" value="Unplaced"/>
</dbReference>
<dbReference type="Proteomes" id="UP000694726">
    <property type="component" value="Unplaced"/>
</dbReference>
<dbReference type="Proteomes" id="UP000694727">
    <property type="component" value="Unplaced"/>
</dbReference>
<dbReference type="Proteomes" id="UP000694728">
    <property type="component" value="Unplaced"/>
</dbReference>
<dbReference type="GO" id="GO:0005882">
    <property type="term" value="C:intermediate filament"/>
    <property type="evidence" value="ECO:0007669"/>
    <property type="project" value="UniProtKB-KW"/>
</dbReference>
<dbReference type="GO" id="GO:0005635">
    <property type="term" value="C:nuclear envelope"/>
    <property type="evidence" value="ECO:0000250"/>
    <property type="project" value="UniProtKB"/>
</dbReference>
<dbReference type="GO" id="GO:0005652">
    <property type="term" value="C:nuclear lamina"/>
    <property type="evidence" value="ECO:0000250"/>
    <property type="project" value="UniProtKB"/>
</dbReference>
<dbReference type="GO" id="GO:0016363">
    <property type="term" value="C:nuclear matrix"/>
    <property type="evidence" value="ECO:0000250"/>
    <property type="project" value="UniProtKB"/>
</dbReference>
<dbReference type="GO" id="GO:0005654">
    <property type="term" value="C:nucleoplasm"/>
    <property type="evidence" value="ECO:0000250"/>
    <property type="project" value="UniProtKB"/>
</dbReference>
<dbReference type="GO" id="GO:0005634">
    <property type="term" value="C:nucleus"/>
    <property type="evidence" value="ECO:0000250"/>
    <property type="project" value="UniProtKB"/>
</dbReference>
<dbReference type="GO" id="GO:0035861">
    <property type="term" value="C:site of double-strand break"/>
    <property type="evidence" value="ECO:0000250"/>
    <property type="project" value="UniProtKB"/>
</dbReference>
<dbReference type="GO" id="GO:0005200">
    <property type="term" value="F:structural constituent of cytoskeleton"/>
    <property type="evidence" value="ECO:0000318"/>
    <property type="project" value="GO_Central"/>
</dbReference>
<dbReference type="GO" id="GO:0160123">
    <property type="term" value="F:structural constituent of nuclear lamina"/>
    <property type="evidence" value="ECO:0000250"/>
    <property type="project" value="UniProtKB"/>
</dbReference>
<dbReference type="GO" id="GO:0090398">
    <property type="term" value="P:cellular senescence"/>
    <property type="evidence" value="ECO:0000250"/>
    <property type="project" value="UniProtKB"/>
</dbReference>
<dbReference type="GO" id="GO:1990683">
    <property type="term" value="P:DNA double-strand break attachment to nuclear envelope"/>
    <property type="evidence" value="ECO:0000250"/>
    <property type="project" value="UniProtKB"/>
</dbReference>
<dbReference type="GO" id="GO:0031507">
    <property type="term" value="P:heterochromatin formation"/>
    <property type="evidence" value="ECO:0000318"/>
    <property type="project" value="GO_Central"/>
</dbReference>
<dbReference type="GO" id="GO:1903243">
    <property type="term" value="P:negative regulation of cardiac muscle hypertrophy in response to stress"/>
    <property type="evidence" value="ECO:0000250"/>
    <property type="project" value="UniProtKB"/>
</dbReference>
<dbReference type="GO" id="GO:0006998">
    <property type="term" value="P:nuclear envelope organization"/>
    <property type="evidence" value="ECO:0000250"/>
    <property type="project" value="UniProtKB"/>
</dbReference>
<dbReference type="GO" id="GO:0007097">
    <property type="term" value="P:nuclear migration"/>
    <property type="evidence" value="ECO:0000318"/>
    <property type="project" value="GO_Central"/>
</dbReference>
<dbReference type="GO" id="GO:0051664">
    <property type="term" value="P:nuclear pore localization"/>
    <property type="evidence" value="ECO:0000318"/>
    <property type="project" value="GO_Central"/>
</dbReference>
<dbReference type="GO" id="GO:0090435">
    <property type="term" value="P:protein localization to nuclear envelope"/>
    <property type="evidence" value="ECO:0000318"/>
    <property type="project" value="GO_Central"/>
</dbReference>
<dbReference type="GO" id="GO:0034504">
    <property type="term" value="P:protein localization to nucleus"/>
    <property type="evidence" value="ECO:0000250"/>
    <property type="project" value="UniProtKB"/>
</dbReference>
<dbReference type="FunFam" id="1.20.5.170:FF:000033">
    <property type="entry name" value="Lamin A/C"/>
    <property type="match status" value="1"/>
</dbReference>
<dbReference type="FunFam" id="1.20.5.500:FF:000002">
    <property type="entry name" value="Lamin A/C"/>
    <property type="match status" value="1"/>
</dbReference>
<dbReference type="FunFam" id="2.60.40.1260:FF:000001">
    <property type="entry name" value="Lamin A/C"/>
    <property type="match status" value="1"/>
</dbReference>
<dbReference type="Gene3D" id="1.20.5.170">
    <property type="match status" value="1"/>
</dbReference>
<dbReference type="Gene3D" id="2.60.40.1260">
    <property type="entry name" value="Lamin Tail domain"/>
    <property type="match status" value="1"/>
</dbReference>
<dbReference type="Gene3D" id="1.20.5.500">
    <property type="entry name" value="Single helix bin"/>
    <property type="match status" value="1"/>
</dbReference>
<dbReference type="Gene3D" id="1.20.5.1160">
    <property type="entry name" value="Vasodilator-stimulated phosphoprotein"/>
    <property type="match status" value="1"/>
</dbReference>
<dbReference type="InterPro" id="IPR018039">
    <property type="entry name" value="IF_conserved"/>
</dbReference>
<dbReference type="InterPro" id="IPR039008">
    <property type="entry name" value="IF_rod_dom"/>
</dbReference>
<dbReference type="InterPro" id="IPR001322">
    <property type="entry name" value="Lamin_tail_dom"/>
</dbReference>
<dbReference type="InterPro" id="IPR036415">
    <property type="entry name" value="Lamin_tail_dom_sf"/>
</dbReference>
<dbReference type="PANTHER" id="PTHR45721">
    <property type="entry name" value="LAMIN DM0-RELATED"/>
    <property type="match status" value="1"/>
</dbReference>
<dbReference type="PANTHER" id="PTHR45721:SF5">
    <property type="entry name" value="PRELAMIN-A_C"/>
    <property type="match status" value="1"/>
</dbReference>
<dbReference type="Pfam" id="PF00038">
    <property type="entry name" value="Filament"/>
    <property type="match status" value="1"/>
</dbReference>
<dbReference type="Pfam" id="PF00932">
    <property type="entry name" value="LTD"/>
    <property type="match status" value="1"/>
</dbReference>
<dbReference type="SMART" id="SM01391">
    <property type="entry name" value="Filament"/>
    <property type="match status" value="1"/>
</dbReference>
<dbReference type="SUPFAM" id="SSF64593">
    <property type="entry name" value="Intermediate filament protein, coiled coil region"/>
    <property type="match status" value="2"/>
</dbReference>
<dbReference type="SUPFAM" id="SSF74853">
    <property type="entry name" value="Lamin A/C globular tail domain"/>
    <property type="match status" value="1"/>
</dbReference>
<dbReference type="PROSITE" id="PS00226">
    <property type="entry name" value="IF_ROD_1"/>
    <property type="match status" value="1"/>
</dbReference>
<dbReference type="PROSITE" id="PS51842">
    <property type="entry name" value="IF_ROD_2"/>
    <property type="match status" value="1"/>
</dbReference>
<dbReference type="PROSITE" id="PS51841">
    <property type="entry name" value="LTD"/>
    <property type="match status" value="1"/>
</dbReference>
<keyword id="KW-0007">Acetylation</keyword>
<keyword id="KW-0025">Alternative splicing</keyword>
<keyword id="KW-0175">Coiled coil</keyword>
<keyword id="KW-0325">Glycoprotein</keyword>
<keyword id="KW-0403">Intermediate filament</keyword>
<keyword id="KW-1017">Isopeptide bond</keyword>
<keyword id="KW-0449">Lipoprotein</keyword>
<keyword id="KW-0488">Methylation</keyword>
<keyword id="KW-0539">Nucleus</keyword>
<keyword id="KW-0597">Phosphoprotein</keyword>
<keyword id="KW-0636">Prenylation</keyword>
<keyword id="KW-1185">Reference proteome</keyword>
<keyword id="KW-0832">Ubl conjugation</keyword>
<organism>
    <name type="scientific">Sus scrofa</name>
    <name type="common">Pig</name>
    <dbReference type="NCBI Taxonomy" id="9823"/>
    <lineage>
        <taxon>Eukaryota</taxon>
        <taxon>Metazoa</taxon>
        <taxon>Chordata</taxon>
        <taxon>Craniata</taxon>
        <taxon>Vertebrata</taxon>
        <taxon>Euteleostomi</taxon>
        <taxon>Mammalia</taxon>
        <taxon>Eutheria</taxon>
        <taxon>Laurasiatheria</taxon>
        <taxon>Artiodactyla</taxon>
        <taxon>Suina</taxon>
        <taxon>Suidae</taxon>
        <taxon>Sus</taxon>
    </lineage>
</organism>
<proteinExistence type="inferred from homology"/>
<gene>
    <name type="primary">LMNA</name>
</gene>